<organism>
    <name type="scientific">Clupea pallasii</name>
    <name type="common">Pacific herring</name>
    <dbReference type="NCBI Taxonomy" id="30724"/>
    <lineage>
        <taxon>Eukaryota</taxon>
        <taxon>Metazoa</taxon>
        <taxon>Chordata</taxon>
        <taxon>Craniata</taxon>
        <taxon>Vertebrata</taxon>
        <taxon>Euteleostomi</taxon>
        <taxon>Actinopterygii</taxon>
        <taxon>Neopterygii</taxon>
        <taxon>Teleostei</taxon>
        <taxon>Clupei</taxon>
        <taxon>Clupeiformes</taxon>
        <taxon>Clupeoidei</taxon>
        <taxon>Clupeidae</taxon>
        <taxon>Clupea</taxon>
    </lineage>
</organism>
<proteinExistence type="evidence at protein level"/>
<gene>
    <name type="primary">gnrh1</name>
</gene>
<feature type="peptide" id="PRO_0000043948" description="Gonadoliberin-1">
    <location>
        <begin position="1"/>
        <end position="10"/>
    </location>
</feature>
<feature type="modified residue" description="Pyrrolidone carboxylic acid" evidence="1">
    <location>
        <position position="1"/>
    </location>
</feature>
<feature type="modified residue" description="Glycine amide" evidence="1">
    <location>
        <position position="10"/>
    </location>
</feature>
<sequence length="10" mass="1105">QHWSHGLSPG</sequence>
<keyword id="KW-0027">Amidation</keyword>
<keyword id="KW-0903">Direct protein sequencing</keyword>
<keyword id="KW-0372">Hormone</keyword>
<keyword id="KW-0873">Pyrrolidone carboxylic acid</keyword>
<keyword id="KW-0964">Secreted</keyword>
<name>GON1_CLUPA</name>
<evidence type="ECO:0000269" key="1">
    <source>
    </source>
</evidence>
<evidence type="ECO:0000305" key="2"/>
<comment type="function">
    <text evidence="1">Stimulates the secretion of gonadotropins.</text>
</comment>
<comment type="subcellular location">
    <subcellularLocation>
        <location>Secreted</location>
    </subcellularLocation>
</comment>
<comment type="similarity">
    <text evidence="2">Belongs to the GnRH family.</text>
</comment>
<protein>
    <recommendedName>
        <fullName>Gonadoliberin-1</fullName>
    </recommendedName>
    <alternativeName>
        <fullName>Gonadoliberin I</fullName>
    </alternativeName>
    <alternativeName>
        <fullName>Gonadotropin-releasing hormone I</fullName>
        <shortName>GnRH-I</shortName>
    </alternativeName>
    <alternativeName>
        <fullName>LH-RH</fullName>
    </alternativeName>
    <alternativeName>
        <fullName>Luliberin I</fullName>
    </alternativeName>
</protein>
<dbReference type="GO" id="GO:0005576">
    <property type="term" value="C:extracellular region"/>
    <property type="evidence" value="ECO:0007669"/>
    <property type="project" value="UniProtKB-SubCell"/>
</dbReference>
<dbReference type="GO" id="GO:0005179">
    <property type="term" value="F:hormone activity"/>
    <property type="evidence" value="ECO:0007669"/>
    <property type="project" value="UniProtKB-KW"/>
</dbReference>
<dbReference type="InterPro" id="IPR002012">
    <property type="entry name" value="GnRH"/>
</dbReference>
<dbReference type="Pfam" id="PF00446">
    <property type="entry name" value="GnRH"/>
    <property type="match status" value="1"/>
</dbReference>
<dbReference type="PROSITE" id="PS00473">
    <property type="entry name" value="GNRH"/>
    <property type="match status" value="1"/>
</dbReference>
<reference key="1">
    <citation type="journal article" date="2000" name="Endocrinology">
        <title>Primary structure and function of three gonadotropin-releasing hormones, including a novel form, from an ancient teleost, herring.</title>
        <authorList>
            <person name="Carolsfeld J."/>
            <person name="Powell J.F.F."/>
            <person name="Park M."/>
            <person name="Fischer W.H."/>
            <person name="Craig A.G."/>
            <person name="Chang J.P."/>
            <person name="Rivier J.E."/>
            <person name="Sherwood N.M."/>
        </authorList>
    </citation>
    <scope>PROTEIN SEQUENCE</scope>
    <scope>PYROGLUTAMATE FORMATION AT GLN-1</scope>
    <scope>AMIDATION AT GLY-10</scope>
    <scope>FUNCTION</scope>
    <source>
        <tissue>Brain</tissue>
        <tissue>Pituitary</tissue>
    </source>
</reference>
<accession>P81749</accession>